<gene>
    <name type="primary">NDUFS4</name>
</gene>
<accession>Q0MQH1</accession>
<feature type="transit peptide" description="Mitochondrion" evidence="1">
    <location>
        <begin position="1"/>
        <end position="42"/>
    </location>
</feature>
<feature type="chain" id="PRO_0000251863" description="NADH dehydrogenase [ubiquinone] iron-sulfur protein 4, mitochondrial">
    <location>
        <begin position="43"/>
        <end position="175"/>
    </location>
</feature>
<feature type="region of interest" description="Disordered" evidence="3">
    <location>
        <begin position="149"/>
        <end position="175"/>
    </location>
</feature>
<comment type="function">
    <text evidence="2">Accessory subunit of the mitochondrial membrane respiratory chain NADH dehydrogenase (Complex I), that is believed not to be involved in catalysis. Complex I functions in the transfer of electrons from NADH to the respiratory chain. The immediate electron acceptor for the enzyme is believed to be ubiquinone.</text>
</comment>
<comment type="subunit">
    <text evidence="2">Mammalian complex I is composed of 45 different subunits. This is a component of the iron-sulfur (IP) fragment of the enzyme. Interacts with BCAP31 and TOMM40; the interaction mediates its translocation to the mitochondria; the interaction with BCAP31 is direct.</text>
</comment>
<comment type="subcellular location">
    <subcellularLocation>
        <location evidence="2">Mitochondrion inner membrane</location>
        <topology evidence="2">Peripheral membrane protein</topology>
        <orientation evidence="2">Matrix side</orientation>
    </subcellularLocation>
    <text evidence="2">The interaction with BCAP31 mediates mitochondria localization.</text>
</comment>
<comment type="similarity">
    <text evidence="4">Belongs to the complex I NDUFS4 subunit family.</text>
</comment>
<proteinExistence type="evidence at transcript level"/>
<evidence type="ECO:0000250" key="1"/>
<evidence type="ECO:0000250" key="2">
    <source>
        <dbReference type="UniProtKB" id="O43181"/>
    </source>
</evidence>
<evidence type="ECO:0000256" key="3">
    <source>
        <dbReference type="SAM" id="MobiDB-lite"/>
    </source>
</evidence>
<evidence type="ECO:0000305" key="4"/>
<organism>
    <name type="scientific">Pan troglodytes</name>
    <name type="common">Chimpanzee</name>
    <dbReference type="NCBI Taxonomy" id="9598"/>
    <lineage>
        <taxon>Eukaryota</taxon>
        <taxon>Metazoa</taxon>
        <taxon>Chordata</taxon>
        <taxon>Craniata</taxon>
        <taxon>Vertebrata</taxon>
        <taxon>Euteleostomi</taxon>
        <taxon>Mammalia</taxon>
        <taxon>Eutheria</taxon>
        <taxon>Euarchontoglires</taxon>
        <taxon>Primates</taxon>
        <taxon>Haplorrhini</taxon>
        <taxon>Catarrhini</taxon>
        <taxon>Hominidae</taxon>
        <taxon>Pan</taxon>
    </lineage>
</organism>
<protein>
    <recommendedName>
        <fullName>NADH dehydrogenase [ubiquinone] iron-sulfur protein 4, mitochondrial</fullName>
    </recommendedName>
    <alternativeName>
        <fullName>Complex I-18 kDa</fullName>
        <shortName>CI-18 kDa</shortName>
    </alternativeName>
    <alternativeName>
        <fullName>NADH-ubiquinone oxidoreductase 18 kDa subunit</fullName>
    </alternativeName>
</protein>
<name>NDUS4_PANTR</name>
<keyword id="KW-0249">Electron transport</keyword>
<keyword id="KW-0472">Membrane</keyword>
<keyword id="KW-0496">Mitochondrion</keyword>
<keyword id="KW-0999">Mitochondrion inner membrane</keyword>
<keyword id="KW-1185">Reference proteome</keyword>
<keyword id="KW-0679">Respiratory chain</keyword>
<keyword id="KW-0809">Transit peptide</keyword>
<keyword id="KW-0813">Transport</keyword>
<dbReference type="EMBL" id="DQ885663">
    <property type="protein sequence ID" value="ABH12172.1"/>
    <property type="molecule type" value="mRNA"/>
</dbReference>
<dbReference type="RefSeq" id="NP_001065262.1">
    <property type="nucleotide sequence ID" value="NM_001071794.1"/>
</dbReference>
<dbReference type="STRING" id="9598.ENSPTRP00000028892"/>
<dbReference type="PaxDb" id="9598-ENSPTRP00000028892"/>
<dbReference type="GeneID" id="461878"/>
<dbReference type="KEGG" id="ptr:461878"/>
<dbReference type="CTD" id="4724"/>
<dbReference type="eggNOG" id="KOG3389">
    <property type="taxonomic scope" value="Eukaryota"/>
</dbReference>
<dbReference type="InParanoid" id="Q0MQH1"/>
<dbReference type="Proteomes" id="UP000002277">
    <property type="component" value="Unplaced"/>
</dbReference>
<dbReference type="GO" id="GO:0005743">
    <property type="term" value="C:mitochondrial inner membrane"/>
    <property type="evidence" value="ECO:0007669"/>
    <property type="project" value="UniProtKB-SubCell"/>
</dbReference>
<dbReference type="GO" id="GO:0045271">
    <property type="term" value="C:respiratory chain complex I"/>
    <property type="evidence" value="ECO:0000250"/>
    <property type="project" value="UniProtKB"/>
</dbReference>
<dbReference type="GO" id="GO:0007420">
    <property type="term" value="P:brain development"/>
    <property type="evidence" value="ECO:0000250"/>
    <property type="project" value="UniProtKB"/>
</dbReference>
<dbReference type="GO" id="GO:0022900">
    <property type="term" value="P:electron transport chain"/>
    <property type="evidence" value="ECO:0007669"/>
    <property type="project" value="InterPro"/>
</dbReference>
<dbReference type="GO" id="GO:0032981">
    <property type="term" value="P:mitochondrial respiratory chain complex I assembly"/>
    <property type="evidence" value="ECO:0000250"/>
    <property type="project" value="UniProtKB"/>
</dbReference>
<dbReference type="GO" id="GO:1902600">
    <property type="term" value="P:proton transmembrane transport"/>
    <property type="evidence" value="ECO:0007669"/>
    <property type="project" value="GOC"/>
</dbReference>
<dbReference type="GO" id="GO:0072593">
    <property type="term" value="P:reactive oxygen species metabolic process"/>
    <property type="evidence" value="ECO:0000250"/>
    <property type="project" value="UniProtKB"/>
</dbReference>
<dbReference type="GO" id="GO:0051591">
    <property type="term" value="P:response to cAMP"/>
    <property type="evidence" value="ECO:0000250"/>
    <property type="project" value="UniProtKB"/>
</dbReference>
<dbReference type="FunFam" id="3.30.160.190:FF:000001">
    <property type="entry name" value="NADH-ubiquinone oxidoreductase 21 kDa subunit mitochondrial"/>
    <property type="match status" value="1"/>
</dbReference>
<dbReference type="Gene3D" id="3.30.160.190">
    <property type="entry name" value="atu1810 like domain"/>
    <property type="match status" value="1"/>
</dbReference>
<dbReference type="InterPro" id="IPR006885">
    <property type="entry name" value="NADH_UbQ_FeS_4_mit-like"/>
</dbReference>
<dbReference type="InterPro" id="IPR038532">
    <property type="entry name" value="NDUFS4-like_sf"/>
</dbReference>
<dbReference type="PANTHER" id="PTHR12219:SF28">
    <property type="entry name" value="NADH DEHYDROGENASE [UBIQUINONE] IRON-SULFUR PROTEIN 4, MITOCHONDRIAL"/>
    <property type="match status" value="1"/>
</dbReference>
<dbReference type="PANTHER" id="PTHR12219">
    <property type="entry name" value="NADH-UBIQUINONE OXIDOREDUCTASE"/>
    <property type="match status" value="1"/>
</dbReference>
<dbReference type="Pfam" id="PF04800">
    <property type="entry name" value="NDUS4"/>
    <property type="match status" value="1"/>
</dbReference>
<reference key="1">
    <citation type="journal article" date="2006" name="Gene">
        <title>Adaptive selection of mitochondrial complex I subunits during primate radiation.</title>
        <authorList>
            <person name="Mishmar D."/>
            <person name="Ruiz-Pesini E."/>
            <person name="Mondragon-Palomino M."/>
            <person name="Procaccio V."/>
            <person name="Gaut B."/>
            <person name="Wallace D.C."/>
        </authorList>
    </citation>
    <scope>NUCLEOTIDE SEQUENCE [MRNA]</scope>
</reference>
<sequence>MAAVSMSVVLRQTLWRRRAVAVAALSVSRVPTRSLRTSTWRLAQDQTQDTQLITVDEKLDITTLTGVPEEHIKTRKVRIFVPARNNMQSGVNNTKKWKMEFDTRERWENPLMGWASTADPLSNMVLTXSTKEDAVSFAEKNGWSYDIEERKVPKPKSKSYGANFSWNKRTRVSTK</sequence>